<feature type="chain" id="PRO_0000135759" description="Histidinol dehydrogenase">
    <location>
        <begin position="1"/>
        <end position="449"/>
    </location>
</feature>
<feature type="active site" description="Proton acceptor" evidence="1">
    <location>
        <position position="343"/>
    </location>
</feature>
<feature type="active site" description="Proton acceptor" evidence="1">
    <location>
        <position position="344"/>
    </location>
</feature>
<feature type="binding site" evidence="1">
    <location>
        <position position="135"/>
    </location>
    <ligand>
        <name>NAD(+)</name>
        <dbReference type="ChEBI" id="CHEBI:57540"/>
    </ligand>
</feature>
<feature type="binding site" evidence="1">
    <location>
        <position position="199"/>
    </location>
    <ligand>
        <name>NAD(+)</name>
        <dbReference type="ChEBI" id="CHEBI:57540"/>
    </ligand>
</feature>
<feature type="binding site" evidence="1">
    <location>
        <position position="229"/>
    </location>
    <ligand>
        <name>NAD(+)</name>
        <dbReference type="ChEBI" id="CHEBI:57540"/>
    </ligand>
</feature>
<feature type="binding site" evidence="1">
    <location>
        <position position="252"/>
    </location>
    <ligand>
        <name>substrate</name>
    </ligand>
</feature>
<feature type="binding site" evidence="1">
    <location>
        <position position="274"/>
    </location>
    <ligand>
        <name>substrate</name>
    </ligand>
</feature>
<feature type="binding site" evidence="1">
    <location>
        <position position="274"/>
    </location>
    <ligand>
        <name>Zn(2+)</name>
        <dbReference type="ChEBI" id="CHEBI:29105"/>
    </ligand>
</feature>
<feature type="binding site" evidence="1">
    <location>
        <position position="277"/>
    </location>
    <ligand>
        <name>substrate</name>
    </ligand>
</feature>
<feature type="binding site" evidence="1">
    <location>
        <position position="277"/>
    </location>
    <ligand>
        <name>Zn(2+)</name>
        <dbReference type="ChEBI" id="CHEBI:29105"/>
    </ligand>
</feature>
<feature type="binding site" evidence="1">
    <location>
        <position position="344"/>
    </location>
    <ligand>
        <name>substrate</name>
    </ligand>
</feature>
<feature type="binding site" evidence="1">
    <location>
        <position position="377"/>
    </location>
    <ligand>
        <name>substrate</name>
    </ligand>
</feature>
<feature type="binding site" evidence="1">
    <location>
        <position position="377"/>
    </location>
    <ligand>
        <name>Zn(2+)</name>
        <dbReference type="ChEBI" id="CHEBI:29105"/>
    </ligand>
</feature>
<feature type="binding site" evidence="1">
    <location>
        <position position="431"/>
    </location>
    <ligand>
        <name>substrate</name>
    </ligand>
</feature>
<feature type="binding site" evidence="1">
    <location>
        <position position="436"/>
    </location>
    <ligand>
        <name>substrate</name>
    </ligand>
</feature>
<feature type="binding site" evidence="1">
    <location>
        <position position="436"/>
    </location>
    <ligand>
        <name>Zn(2+)</name>
        <dbReference type="ChEBI" id="CHEBI:29105"/>
    </ligand>
</feature>
<protein>
    <recommendedName>
        <fullName evidence="1">Histidinol dehydrogenase</fullName>
        <shortName evidence="1">HDH</shortName>
        <ecNumber evidence="1">1.1.1.23</ecNumber>
    </recommendedName>
</protein>
<organism>
    <name type="scientific">Corynebacterium diphtheriae (strain ATCC 700971 / NCTC 13129 / Biotype gravis)</name>
    <dbReference type="NCBI Taxonomy" id="257309"/>
    <lineage>
        <taxon>Bacteria</taxon>
        <taxon>Bacillati</taxon>
        <taxon>Actinomycetota</taxon>
        <taxon>Actinomycetes</taxon>
        <taxon>Mycobacteriales</taxon>
        <taxon>Corynebacteriaceae</taxon>
        <taxon>Corynebacterium</taxon>
    </lineage>
</organism>
<gene>
    <name evidence="1" type="primary">hisD</name>
    <name type="ordered locus">DIP1566</name>
</gene>
<keyword id="KW-0028">Amino-acid biosynthesis</keyword>
<keyword id="KW-0368">Histidine biosynthesis</keyword>
<keyword id="KW-0479">Metal-binding</keyword>
<keyword id="KW-0520">NAD</keyword>
<keyword id="KW-0560">Oxidoreductase</keyword>
<keyword id="KW-1185">Reference proteome</keyword>
<keyword id="KW-0862">Zinc</keyword>
<sequence length="449" mass="47762">MRKRKIMLNVIDLRGHVPTTSELRRTLPRGGTDINSVLPIVEPVVTDVKNRGAAAALDYGEKFDHVRPTSIRVPQDVIDQALDSLDPNVIEALKESIARVRAVHSEQLPAQHTTSFGEGATITEKFIPVSRVGLYAPGGNAVYPSSVIMNVVPAQEAGVESLVVASPPQKDHGGWPHPTILAAAKLLGVTEVWAMGGAQAVALLAYGDDTQQNSAEVLEPVDMITGPGNIFVTAAKRLVRGVVGIDSEAGPTEIAIVADAQANPVWIAYDLISQAEHDVLAASVLITDSEELAQRVNEEVAARYSVTRNADRVSEALKGQQSGIVLVDDLPTAVIVADAYAAEHLEIHTAESHKVAEQIRNAGAIFVGGYSPVPLGDYSAGSNHVLPTSGSARYSSGLSTHTFLKPVNVIYYDEVALKEISDTVITLADAEDLPAHGEAIRTRFENLGN</sequence>
<name>HISX_CORDI</name>
<dbReference type="EC" id="1.1.1.23" evidence="1"/>
<dbReference type="EMBL" id="BX248358">
    <property type="protein sequence ID" value="CAE50091.1"/>
    <property type="molecule type" value="Genomic_DNA"/>
</dbReference>
<dbReference type="SMR" id="P60858"/>
<dbReference type="STRING" id="257309.DIP1566"/>
<dbReference type="KEGG" id="cdi:DIP1566"/>
<dbReference type="HOGENOM" id="CLU_006732_3_1_11"/>
<dbReference type="UniPathway" id="UPA00031">
    <property type="reaction ID" value="UER00014"/>
</dbReference>
<dbReference type="Proteomes" id="UP000002198">
    <property type="component" value="Chromosome"/>
</dbReference>
<dbReference type="GO" id="GO:0005829">
    <property type="term" value="C:cytosol"/>
    <property type="evidence" value="ECO:0007669"/>
    <property type="project" value="TreeGrafter"/>
</dbReference>
<dbReference type="GO" id="GO:0004399">
    <property type="term" value="F:histidinol dehydrogenase activity"/>
    <property type="evidence" value="ECO:0007669"/>
    <property type="project" value="UniProtKB-UniRule"/>
</dbReference>
<dbReference type="GO" id="GO:0051287">
    <property type="term" value="F:NAD binding"/>
    <property type="evidence" value="ECO:0007669"/>
    <property type="project" value="InterPro"/>
</dbReference>
<dbReference type="GO" id="GO:0008270">
    <property type="term" value="F:zinc ion binding"/>
    <property type="evidence" value="ECO:0007669"/>
    <property type="project" value="UniProtKB-UniRule"/>
</dbReference>
<dbReference type="GO" id="GO:0000105">
    <property type="term" value="P:L-histidine biosynthetic process"/>
    <property type="evidence" value="ECO:0007669"/>
    <property type="project" value="UniProtKB-UniRule"/>
</dbReference>
<dbReference type="CDD" id="cd06572">
    <property type="entry name" value="Histidinol_dh"/>
    <property type="match status" value="1"/>
</dbReference>
<dbReference type="FunFam" id="3.40.50.1980:FF:000001">
    <property type="entry name" value="Histidinol dehydrogenase"/>
    <property type="match status" value="1"/>
</dbReference>
<dbReference type="Gene3D" id="1.20.5.1300">
    <property type="match status" value="1"/>
</dbReference>
<dbReference type="Gene3D" id="3.40.50.1980">
    <property type="entry name" value="Nitrogenase molybdenum iron protein domain"/>
    <property type="match status" value="2"/>
</dbReference>
<dbReference type="HAMAP" id="MF_01024">
    <property type="entry name" value="HisD"/>
    <property type="match status" value="1"/>
</dbReference>
<dbReference type="InterPro" id="IPR016161">
    <property type="entry name" value="Ald_DH/histidinol_DH"/>
</dbReference>
<dbReference type="InterPro" id="IPR001692">
    <property type="entry name" value="Histidinol_DH_CS"/>
</dbReference>
<dbReference type="InterPro" id="IPR022695">
    <property type="entry name" value="Histidinol_DH_monofunct"/>
</dbReference>
<dbReference type="InterPro" id="IPR012131">
    <property type="entry name" value="Hstdl_DH"/>
</dbReference>
<dbReference type="NCBIfam" id="TIGR00069">
    <property type="entry name" value="hisD"/>
    <property type="match status" value="1"/>
</dbReference>
<dbReference type="PANTHER" id="PTHR21256:SF2">
    <property type="entry name" value="HISTIDINE BIOSYNTHESIS TRIFUNCTIONAL PROTEIN"/>
    <property type="match status" value="1"/>
</dbReference>
<dbReference type="PANTHER" id="PTHR21256">
    <property type="entry name" value="HISTIDINOL DEHYDROGENASE HDH"/>
    <property type="match status" value="1"/>
</dbReference>
<dbReference type="Pfam" id="PF00815">
    <property type="entry name" value="Histidinol_dh"/>
    <property type="match status" value="1"/>
</dbReference>
<dbReference type="PIRSF" id="PIRSF000099">
    <property type="entry name" value="Histidinol_dh"/>
    <property type="match status" value="1"/>
</dbReference>
<dbReference type="PRINTS" id="PR00083">
    <property type="entry name" value="HOLDHDRGNASE"/>
</dbReference>
<dbReference type="SUPFAM" id="SSF53720">
    <property type="entry name" value="ALDH-like"/>
    <property type="match status" value="1"/>
</dbReference>
<dbReference type="PROSITE" id="PS00611">
    <property type="entry name" value="HISOL_DEHYDROGENASE"/>
    <property type="match status" value="1"/>
</dbReference>
<accession>P60858</accession>
<evidence type="ECO:0000255" key="1">
    <source>
        <dbReference type="HAMAP-Rule" id="MF_01024"/>
    </source>
</evidence>
<proteinExistence type="inferred from homology"/>
<reference key="1">
    <citation type="journal article" date="2003" name="Nucleic Acids Res.">
        <title>The complete genome sequence and analysis of Corynebacterium diphtheriae NCTC13129.</title>
        <authorList>
            <person name="Cerdeno-Tarraga A.-M."/>
            <person name="Efstratiou A."/>
            <person name="Dover L.G."/>
            <person name="Holden M.T.G."/>
            <person name="Pallen M.J."/>
            <person name="Bentley S.D."/>
            <person name="Besra G.S."/>
            <person name="Churcher C.M."/>
            <person name="James K.D."/>
            <person name="De Zoysa A."/>
            <person name="Chillingworth T."/>
            <person name="Cronin A."/>
            <person name="Dowd L."/>
            <person name="Feltwell T."/>
            <person name="Hamlin N."/>
            <person name="Holroyd S."/>
            <person name="Jagels K."/>
            <person name="Moule S."/>
            <person name="Quail M.A."/>
            <person name="Rabbinowitsch E."/>
            <person name="Rutherford K.M."/>
            <person name="Thomson N.R."/>
            <person name="Unwin L."/>
            <person name="Whitehead S."/>
            <person name="Barrell B.G."/>
            <person name="Parkhill J."/>
        </authorList>
    </citation>
    <scope>NUCLEOTIDE SEQUENCE [LARGE SCALE GENOMIC DNA]</scope>
    <source>
        <strain>ATCC 700971 / NCTC 13129 / Biotype gravis</strain>
    </source>
</reference>
<comment type="function">
    <text evidence="1">Catalyzes the sequential NAD-dependent oxidations of L-histidinol to L-histidinaldehyde and then to L-histidine.</text>
</comment>
<comment type="catalytic activity">
    <reaction evidence="1">
        <text>L-histidinol + 2 NAD(+) + H2O = L-histidine + 2 NADH + 3 H(+)</text>
        <dbReference type="Rhea" id="RHEA:20641"/>
        <dbReference type="ChEBI" id="CHEBI:15377"/>
        <dbReference type="ChEBI" id="CHEBI:15378"/>
        <dbReference type="ChEBI" id="CHEBI:57540"/>
        <dbReference type="ChEBI" id="CHEBI:57595"/>
        <dbReference type="ChEBI" id="CHEBI:57699"/>
        <dbReference type="ChEBI" id="CHEBI:57945"/>
        <dbReference type="EC" id="1.1.1.23"/>
    </reaction>
</comment>
<comment type="cofactor">
    <cofactor evidence="1">
        <name>Zn(2+)</name>
        <dbReference type="ChEBI" id="CHEBI:29105"/>
    </cofactor>
    <text evidence="1">Binds 1 zinc ion per subunit.</text>
</comment>
<comment type="pathway">
    <text evidence="1">Amino-acid biosynthesis; L-histidine biosynthesis; L-histidine from 5-phospho-alpha-D-ribose 1-diphosphate: step 9/9.</text>
</comment>
<comment type="similarity">
    <text evidence="1">Belongs to the histidinol dehydrogenase family.</text>
</comment>